<evidence type="ECO:0000255" key="1">
    <source>
        <dbReference type="HAMAP-Rule" id="MF_00004"/>
    </source>
</evidence>
<evidence type="ECO:0000305" key="2"/>
<keyword id="KW-0963">Cytoplasm</keyword>
<keyword id="KW-0328">Glycosyltransferase</keyword>
<keyword id="KW-0660">Purine salvage</keyword>
<keyword id="KW-0808">Transferase</keyword>
<name>APT_BRUME</name>
<gene>
    <name evidence="1" type="primary">apt</name>
    <name type="ordered locus">BMEI0476</name>
</gene>
<protein>
    <recommendedName>
        <fullName evidence="1">Adenine phosphoribosyltransferase</fullName>
        <shortName evidence="1">APRT</shortName>
        <ecNumber evidence="1">2.4.2.7</ecNumber>
    </recommendedName>
</protein>
<dbReference type="EC" id="2.4.2.7" evidence="1"/>
<dbReference type="EMBL" id="AE008917">
    <property type="protein sequence ID" value="AAL51657.1"/>
    <property type="status" value="ALT_INIT"/>
    <property type="molecule type" value="Genomic_DNA"/>
</dbReference>
<dbReference type="PIR" id="AF3311">
    <property type="entry name" value="AF3311"/>
</dbReference>
<dbReference type="RefSeq" id="WP_002964645.1">
    <property type="nucleotide sequence ID" value="NZ_GG703780.1"/>
</dbReference>
<dbReference type="SMR" id="P63542"/>
<dbReference type="KEGG" id="bme:BMEI0476"/>
<dbReference type="eggNOG" id="COG0503">
    <property type="taxonomic scope" value="Bacteria"/>
</dbReference>
<dbReference type="PhylomeDB" id="P63542"/>
<dbReference type="UniPathway" id="UPA00588">
    <property type="reaction ID" value="UER00646"/>
</dbReference>
<dbReference type="Proteomes" id="UP000000419">
    <property type="component" value="Chromosome I"/>
</dbReference>
<dbReference type="GO" id="GO:0005737">
    <property type="term" value="C:cytoplasm"/>
    <property type="evidence" value="ECO:0007669"/>
    <property type="project" value="UniProtKB-SubCell"/>
</dbReference>
<dbReference type="GO" id="GO:0002055">
    <property type="term" value="F:adenine binding"/>
    <property type="evidence" value="ECO:0007669"/>
    <property type="project" value="TreeGrafter"/>
</dbReference>
<dbReference type="GO" id="GO:0003999">
    <property type="term" value="F:adenine phosphoribosyltransferase activity"/>
    <property type="evidence" value="ECO:0007669"/>
    <property type="project" value="UniProtKB-UniRule"/>
</dbReference>
<dbReference type="GO" id="GO:0016208">
    <property type="term" value="F:AMP binding"/>
    <property type="evidence" value="ECO:0007669"/>
    <property type="project" value="TreeGrafter"/>
</dbReference>
<dbReference type="GO" id="GO:0006168">
    <property type="term" value="P:adenine salvage"/>
    <property type="evidence" value="ECO:0007669"/>
    <property type="project" value="InterPro"/>
</dbReference>
<dbReference type="GO" id="GO:0044209">
    <property type="term" value="P:AMP salvage"/>
    <property type="evidence" value="ECO:0007669"/>
    <property type="project" value="UniProtKB-UniRule"/>
</dbReference>
<dbReference type="GO" id="GO:0006166">
    <property type="term" value="P:purine ribonucleoside salvage"/>
    <property type="evidence" value="ECO:0007669"/>
    <property type="project" value="UniProtKB-KW"/>
</dbReference>
<dbReference type="CDD" id="cd06223">
    <property type="entry name" value="PRTases_typeI"/>
    <property type="match status" value="1"/>
</dbReference>
<dbReference type="FunFam" id="3.40.50.2020:FF:000021">
    <property type="entry name" value="Adenine phosphoribosyltransferase"/>
    <property type="match status" value="1"/>
</dbReference>
<dbReference type="Gene3D" id="3.40.50.2020">
    <property type="match status" value="1"/>
</dbReference>
<dbReference type="HAMAP" id="MF_00004">
    <property type="entry name" value="Aden_phosphoribosyltr"/>
    <property type="match status" value="1"/>
</dbReference>
<dbReference type="InterPro" id="IPR005764">
    <property type="entry name" value="Ade_phspho_trans"/>
</dbReference>
<dbReference type="InterPro" id="IPR000836">
    <property type="entry name" value="PRibTrfase_dom"/>
</dbReference>
<dbReference type="InterPro" id="IPR029057">
    <property type="entry name" value="PRTase-like"/>
</dbReference>
<dbReference type="InterPro" id="IPR050054">
    <property type="entry name" value="UPRTase/APRTase"/>
</dbReference>
<dbReference type="NCBIfam" id="TIGR01090">
    <property type="entry name" value="apt"/>
    <property type="match status" value="1"/>
</dbReference>
<dbReference type="NCBIfam" id="NF002634">
    <property type="entry name" value="PRK02304.1-3"/>
    <property type="match status" value="1"/>
</dbReference>
<dbReference type="NCBIfam" id="NF002636">
    <property type="entry name" value="PRK02304.1-5"/>
    <property type="match status" value="1"/>
</dbReference>
<dbReference type="PANTHER" id="PTHR32315">
    <property type="entry name" value="ADENINE PHOSPHORIBOSYLTRANSFERASE"/>
    <property type="match status" value="1"/>
</dbReference>
<dbReference type="PANTHER" id="PTHR32315:SF3">
    <property type="entry name" value="ADENINE PHOSPHORIBOSYLTRANSFERASE"/>
    <property type="match status" value="1"/>
</dbReference>
<dbReference type="Pfam" id="PF00156">
    <property type="entry name" value="Pribosyltran"/>
    <property type="match status" value="1"/>
</dbReference>
<dbReference type="SUPFAM" id="SSF53271">
    <property type="entry name" value="PRTase-like"/>
    <property type="match status" value="1"/>
</dbReference>
<dbReference type="PROSITE" id="PS00103">
    <property type="entry name" value="PUR_PYR_PR_TRANSFER"/>
    <property type="match status" value="1"/>
</dbReference>
<proteinExistence type="inferred from homology"/>
<comment type="function">
    <text evidence="1">Catalyzes a salvage reaction resulting in the formation of AMP, that is energically less costly than de novo synthesis.</text>
</comment>
<comment type="catalytic activity">
    <reaction evidence="1">
        <text>AMP + diphosphate = 5-phospho-alpha-D-ribose 1-diphosphate + adenine</text>
        <dbReference type="Rhea" id="RHEA:16609"/>
        <dbReference type="ChEBI" id="CHEBI:16708"/>
        <dbReference type="ChEBI" id="CHEBI:33019"/>
        <dbReference type="ChEBI" id="CHEBI:58017"/>
        <dbReference type="ChEBI" id="CHEBI:456215"/>
        <dbReference type="EC" id="2.4.2.7"/>
    </reaction>
</comment>
<comment type="pathway">
    <text evidence="1">Purine metabolism; AMP biosynthesis via salvage pathway; AMP from adenine: step 1/1.</text>
</comment>
<comment type="subunit">
    <text evidence="1">Homodimer.</text>
</comment>
<comment type="subcellular location">
    <subcellularLocation>
        <location evidence="1">Cytoplasm</location>
    </subcellularLocation>
</comment>
<comment type="similarity">
    <text evidence="1">Belongs to the purine/pyrimidine phosphoribosyltransferase family.</text>
</comment>
<comment type="sequence caution" evidence="2">
    <conflict type="erroneous initiation">
        <sequence resource="EMBL-CDS" id="AAL51657"/>
    </conflict>
</comment>
<accession>P63542</accession>
<accession>Q8YIG8</accession>
<organism>
    <name type="scientific">Brucella melitensis biotype 1 (strain ATCC 23456 / CCUG 17765 / NCTC 10094 / 16M)</name>
    <dbReference type="NCBI Taxonomy" id="224914"/>
    <lineage>
        <taxon>Bacteria</taxon>
        <taxon>Pseudomonadati</taxon>
        <taxon>Pseudomonadota</taxon>
        <taxon>Alphaproteobacteria</taxon>
        <taxon>Hyphomicrobiales</taxon>
        <taxon>Brucellaceae</taxon>
        <taxon>Brucella/Ochrobactrum group</taxon>
        <taxon>Brucella</taxon>
    </lineage>
</organism>
<reference key="1">
    <citation type="journal article" date="2002" name="Proc. Natl. Acad. Sci. U.S.A.">
        <title>The genome sequence of the facultative intracellular pathogen Brucella melitensis.</title>
        <authorList>
            <person name="DelVecchio V.G."/>
            <person name="Kapatral V."/>
            <person name="Redkar R.J."/>
            <person name="Patra G."/>
            <person name="Mujer C."/>
            <person name="Los T."/>
            <person name="Ivanova N."/>
            <person name="Anderson I."/>
            <person name="Bhattacharyya A."/>
            <person name="Lykidis A."/>
            <person name="Reznik G."/>
            <person name="Jablonski L."/>
            <person name="Larsen N."/>
            <person name="D'Souza M."/>
            <person name="Bernal A."/>
            <person name="Mazur M."/>
            <person name="Goltsman E."/>
            <person name="Selkov E."/>
            <person name="Elzer P.H."/>
            <person name="Hagius S."/>
            <person name="O'Callaghan D."/>
            <person name="Letesson J.-J."/>
            <person name="Haselkorn R."/>
            <person name="Kyrpides N.C."/>
            <person name="Overbeek R."/>
        </authorList>
    </citation>
    <scope>NUCLEOTIDE SEQUENCE [LARGE SCALE GENOMIC DNA]</scope>
    <source>
        <strain>ATCC 23456 / CCUG 17765 / NCTC 10094 / 16M</strain>
    </source>
</reference>
<feature type="chain" id="PRO_0000149364" description="Adenine phosphoribosyltransferase">
    <location>
        <begin position="1"/>
        <end position="181"/>
    </location>
</feature>
<sequence length="181" mass="19614">MESGFKVTLKDAIRTIPDYPKPGVQFRDVTTLMGNAQAFRRAVDELVYPYAGNRIDKVAGIEARGFILGGAIAHQLSAGFVPIRKKGKLPRDTVRIAYSLEYGVDEMEMHRDAIEKGERVVLVDDLIATGGTAEAAAKLLLQMGAEIVAACFIIDLPDLGGRKKLEALGLPVRTLVAFEGD</sequence>